<evidence type="ECO:0000250" key="1"/>
<evidence type="ECO:0000250" key="2">
    <source>
        <dbReference type="UniProtKB" id="Q3KRD0"/>
    </source>
</evidence>
<evidence type="ECO:0000250" key="3">
    <source>
        <dbReference type="UniProtKB" id="Q6PI48"/>
    </source>
</evidence>
<evidence type="ECO:0000255" key="4"/>
<evidence type="ECO:0000305" key="5"/>
<reference key="1">
    <citation type="submission" date="2007-07" db="EMBL/GenBank/DDBJ databases">
        <authorList>
            <consortium name="NIH - Mammalian Gene Collection (MGC) project"/>
        </authorList>
    </citation>
    <scope>NUCLEOTIDE SEQUENCE [LARGE SCALE MRNA]</scope>
    <source>
        <strain>Hereford</strain>
        <tissue>Thymus</tissue>
    </source>
</reference>
<gene>
    <name type="primary">DARS2</name>
</gene>
<organism>
    <name type="scientific">Bos taurus</name>
    <name type="common">Bovine</name>
    <dbReference type="NCBI Taxonomy" id="9913"/>
    <lineage>
        <taxon>Eukaryota</taxon>
        <taxon>Metazoa</taxon>
        <taxon>Chordata</taxon>
        <taxon>Craniata</taxon>
        <taxon>Vertebrata</taxon>
        <taxon>Euteleostomi</taxon>
        <taxon>Mammalia</taxon>
        <taxon>Eutheria</taxon>
        <taxon>Laurasiatheria</taxon>
        <taxon>Artiodactyla</taxon>
        <taxon>Ruminantia</taxon>
        <taxon>Pecora</taxon>
        <taxon>Bovidae</taxon>
        <taxon>Bovinae</taxon>
        <taxon>Bos</taxon>
    </lineage>
</organism>
<feature type="transit peptide" description="Mitochondrion" evidence="4">
    <location>
        <begin position="1"/>
        <end position="44"/>
    </location>
</feature>
<feature type="chain" id="PRO_0000327860" description="Aspartate--tRNA ligase, mitochondrial">
    <location>
        <begin position="45"/>
        <end position="651"/>
    </location>
</feature>
<feature type="region of interest" description="Aspartate" evidence="1">
    <location>
        <begin position="241"/>
        <end position="244"/>
    </location>
</feature>
<feature type="binding site" evidence="1">
    <location>
        <begin position="263"/>
        <end position="265"/>
    </location>
    <ligand>
        <name>ATP</name>
        <dbReference type="ChEBI" id="CHEBI:30616"/>
    </ligand>
</feature>
<feature type="binding site" evidence="1">
    <location>
        <position position="263"/>
    </location>
    <ligand>
        <name>L-aspartate</name>
        <dbReference type="ChEBI" id="CHEBI:29991"/>
    </ligand>
</feature>
<feature type="binding site" evidence="1">
    <location>
        <position position="532"/>
    </location>
    <ligand>
        <name>ATP</name>
        <dbReference type="ChEBI" id="CHEBI:30616"/>
    </ligand>
</feature>
<feature type="binding site" evidence="1">
    <location>
        <position position="539"/>
    </location>
    <ligand>
        <name>L-aspartate</name>
        <dbReference type="ChEBI" id="CHEBI:29991"/>
    </ligand>
</feature>
<feature type="binding site" evidence="1">
    <location>
        <begin position="581"/>
        <end position="584"/>
    </location>
    <ligand>
        <name>ATP</name>
        <dbReference type="ChEBI" id="CHEBI:30616"/>
    </ligand>
</feature>
<feature type="modified residue" description="Phosphothreonine" evidence="2">
    <location>
        <position position="216"/>
    </location>
</feature>
<feature type="modified residue" description="Phosphoserine" evidence="3">
    <location>
        <position position="239"/>
    </location>
</feature>
<feature type="modified residue" description="N6-acetyllysine" evidence="3">
    <location>
        <position position="379"/>
    </location>
</feature>
<proteinExistence type="evidence at transcript level"/>
<dbReference type="EC" id="6.1.1.12" evidence="3"/>
<dbReference type="EMBL" id="BC149492">
    <property type="protein sequence ID" value="AAI49493.1"/>
    <property type="molecule type" value="mRNA"/>
</dbReference>
<dbReference type="RefSeq" id="NP_001095692.1">
    <property type="nucleotide sequence ID" value="NM_001102222.1"/>
</dbReference>
<dbReference type="SMR" id="A6QPU5"/>
<dbReference type="FunCoup" id="A6QPU5">
    <property type="interactions" value="2230"/>
</dbReference>
<dbReference type="STRING" id="9913.ENSBTAP00000005704"/>
<dbReference type="PaxDb" id="9913-ENSBTAP00000005704"/>
<dbReference type="GeneID" id="538772"/>
<dbReference type="KEGG" id="bta:538772"/>
<dbReference type="CTD" id="55157"/>
<dbReference type="eggNOG" id="KOG2411">
    <property type="taxonomic scope" value="Eukaryota"/>
</dbReference>
<dbReference type="InParanoid" id="A6QPU5"/>
<dbReference type="OrthoDB" id="439710at2759"/>
<dbReference type="Proteomes" id="UP000009136">
    <property type="component" value="Unplaced"/>
</dbReference>
<dbReference type="GO" id="GO:0005759">
    <property type="term" value="C:mitochondrial matrix"/>
    <property type="evidence" value="ECO:0000250"/>
    <property type="project" value="UniProtKB"/>
</dbReference>
<dbReference type="GO" id="GO:0031966">
    <property type="term" value="C:mitochondrial membrane"/>
    <property type="evidence" value="ECO:0000250"/>
    <property type="project" value="UniProtKB"/>
</dbReference>
<dbReference type="GO" id="GO:0005739">
    <property type="term" value="C:mitochondrion"/>
    <property type="evidence" value="ECO:0000318"/>
    <property type="project" value="GO_Central"/>
</dbReference>
<dbReference type="GO" id="GO:0004815">
    <property type="term" value="F:aspartate-tRNA ligase activity"/>
    <property type="evidence" value="ECO:0000250"/>
    <property type="project" value="UniProtKB"/>
</dbReference>
<dbReference type="GO" id="GO:0005524">
    <property type="term" value="F:ATP binding"/>
    <property type="evidence" value="ECO:0007669"/>
    <property type="project" value="UniProtKB-KW"/>
</dbReference>
<dbReference type="GO" id="GO:0003676">
    <property type="term" value="F:nucleic acid binding"/>
    <property type="evidence" value="ECO:0007669"/>
    <property type="project" value="InterPro"/>
</dbReference>
<dbReference type="GO" id="GO:0006422">
    <property type="term" value="P:aspartyl-tRNA aminoacylation"/>
    <property type="evidence" value="ECO:0000318"/>
    <property type="project" value="GO_Central"/>
</dbReference>
<dbReference type="GO" id="GO:0070145">
    <property type="term" value="P:mitochondrial asparaginyl-tRNA aminoacylation"/>
    <property type="evidence" value="ECO:0000250"/>
    <property type="project" value="UniProtKB"/>
</dbReference>
<dbReference type="CDD" id="cd00777">
    <property type="entry name" value="AspRS_core"/>
    <property type="match status" value="1"/>
</dbReference>
<dbReference type="CDD" id="cd04317">
    <property type="entry name" value="EcAspRS_like_N"/>
    <property type="match status" value="1"/>
</dbReference>
<dbReference type="FunFam" id="2.40.50.140:FF:000202">
    <property type="entry name" value="Aspartate--tRNA ligase, mitochondrial"/>
    <property type="match status" value="1"/>
</dbReference>
<dbReference type="FunFam" id="3.30.1360.30:FF:000002">
    <property type="entry name" value="Aspartate--tRNA ligase, mitochondrial"/>
    <property type="match status" value="1"/>
</dbReference>
<dbReference type="Gene3D" id="3.30.930.10">
    <property type="entry name" value="Bira Bifunctional Protein, Domain 2"/>
    <property type="match status" value="1"/>
</dbReference>
<dbReference type="Gene3D" id="3.30.1360.30">
    <property type="entry name" value="GAD-like domain"/>
    <property type="match status" value="1"/>
</dbReference>
<dbReference type="Gene3D" id="2.40.50.140">
    <property type="entry name" value="Nucleic acid-binding proteins"/>
    <property type="match status" value="1"/>
</dbReference>
<dbReference type="HAMAP" id="MF_00044">
    <property type="entry name" value="Asp_tRNA_synth_type1"/>
    <property type="match status" value="1"/>
</dbReference>
<dbReference type="InterPro" id="IPR004364">
    <property type="entry name" value="Aa-tRNA-synt_II"/>
</dbReference>
<dbReference type="InterPro" id="IPR006195">
    <property type="entry name" value="aa-tRNA-synth_II"/>
</dbReference>
<dbReference type="InterPro" id="IPR045864">
    <property type="entry name" value="aa-tRNA-synth_II/BPL/LPL"/>
</dbReference>
<dbReference type="InterPro" id="IPR004524">
    <property type="entry name" value="Asp-tRNA-ligase_1"/>
</dbReference>
<dbReference type="InterPro" id="IPR047089">
    <property type="entry name" value="Asp-tRNA-ligase_1_N"/>
</dbReference>
<dbReference type="InterPro" id="IPR002312">
    <property type="entry name" value="Asp/Asn-tRNA-synth_IIb"/>
</dbReference>
<dbReference type="InterPro" id="IPR047090">
    <property type="entry name" value="AspRS_core"/>
</dbReference>
<dbReference type="InterPro" id="IPR004115">
    <property type="entry name" value="GAD-like_sf"/>
</dbReference>
<dbReference type="InterPro" id="IPR029351">
    <property type="entry name" value="GAD_dom"/>
</dbReference>
<dbReference type="InterPro" id="IPR012340">
    <property type="entry name" value="NA-bd_OB-fold"/>
</dbReference>
<dbReference type="InterPro" id="IPR004365">
    <property type="entry name" value="NA-bd_OB_tRNA"/>
</dbReference>
<dbReference type="NCBIfam" id="TIGR00459">
    <property type="entry name" value="aspS_bact"/>
    <property type="match status" value="1"/>
</dbReference>
<dbReference type="NCBIfam" id="NF001750">
    <property type="entry name" value="PRK00476.1"/>
    <property type="match status" value="1"/>
</dbReference>
<dbReference type="PANTHER" id="PTHR22594:SF5">
    <property type="entry name" value="ASPARTATE--TRNA LIGASE, MITOCHONDRIAL"/>
    <property type="match status" value="1"/>
</dbReference>
<dbReference type="PANTHER" id="PTHR22594">
    <property type="entry name" value="ASPARTYL/LYSYL-TRNA SYNTHETASE"/>
    <property type="match status" value="1"/>
</dbReference>
<dbReference type="Pfam" id="PF02938">
    <property type="entry name" value="GAD"/>
    <property type="match status" value="1"/>
</dbReference>
<dbReference type="Pfam" id="PF00152">
    <property type="entry name" value="tRNA-synt_2"/>
    <property type="match status" value="1"/>
</dbReference>
<dbReference type="Pfam" id="PF01336">
    <property type="entry name" value="tRNA_anti-codon"/>
    <property type="match status" value="1"/>
</dbReference>
<dbReference type="PRINTS" id="PR01042">
    <property type="entry name" value="TRNASYNTHASP"/>
</dbReference>
<dbReference type="SUPFAM" id="SSF55681">
    <property type="entry name" value="Class II aaRS and biotin synthetases"/>
    <property type="match status" value="1"/>
</dbReference>
<dbReference type="SUPFAM" id="SSF55261">
    <property type="entry name" value="GAD domain-like"/>
    <property type="match status" value="1"/>
</dbReference>
<dbReference type="SUPFAM" id="SSF50249">
    <property type="entry name" value="Nucleic acid-binding proteins"/>
    <property type="match status" value="1"/>
</dbReference>
<dbReference type="PROSITE" id="PS50862">
    <property type="entry name" value="AA_TRNA_LIGASE_II"/>
    <property type="match status" value="1"/>
</dbReference>
<comment type="function">
    <text evidence="3">Catalyzes the attachment of aspartate to tRNA(Asp) in a two-step reaction: aspartate is first activated by ATP to form Asp-AMP and then transferred to the acceptor end of tRNA(Asp).</text>
</comment>
<comment type="catalytic activity">
    <reaction evidence="3">
        <text>tRNA(Asp) + L-aspartate + ATP = L-aspartyl-tRNA(Asp) + AMP + diphosphate</text>
        <dbReference type="Rhea" id="RHEA:19649"/>
        <dbReference type="Rhea" id="RHEA-COMP:9660"/>
        <dbReference type="Rhea" id="RHEA-COMP:9678"/>
        <dbReference type="ChEBI" id="CHEBI:29991"/>
        <dbReference type="ChEBI" id="CHEBI:30616"/>
        <dbReference type="ChEBI" id="CHEBI:33019"/>
        <dbReference type="ChEBI" id="CHEBI:78442"/>
        <dbReference type="ChEBI" id="CHEBI:78516"/>
        <dbReference type="ChEBI" id="CHEBI:456215"/>
        <dbReference type="EC" id="6.1.1.12"/>
    </reaction>
</comment>
<comment type="subunit">
    <text evidence="3">Homodimer.</text>
</comment>
<comment type="subcellular location">
    <subcellularLocation>
        <location evidence="3">Mitochondrion matrix</location>
    </subcellularLocation>
    <subcellularLocation>
        <location evidence="3">Mitochondrion membrane</location>
    </subcellularLocation>
</comment>
<comment type="similarity">
    <text evidence="5">Belongs to the class-II aminoacyl-tRNA synthetase family. Type 1 subfamily.</text>
</comment>
<name>SYDM_BOVIN</name>
<sequence length="651" mass="73688">MFCWLSRLCGELSTPTRRTTQLIWSSAARSMVLSSQRIPELSSFVARTNTCGELRSSHLGQEVTLCGWIQFRRQNIFLVLRDFHGLVQVVIPQDESAASVKKILCEAPMESVVQVSGTVISRPPGQKNPKMPTGEIEIKVKTAKLLNSCKKLPFEIKDFMKKTETLRLQYRYLDLRSVQMQYNLRLRSQMVMKMREYLCNLHGFVDVETPTLFKRTPGGAKEFVIPSREPGKFYSLPQSPQQFKQLLMVGGLDRYFQVARCYRDEGSRPDRQPEFTQIDIEMSFVDQTGVQSLIEGLLQYSWPSDKDPLVVPFPSMPFAEALASYGTDKPDTRFGMKIVDISDMFRNTEVGFLQDALSKPQGTVKAICIRKGAKYLKRKDIESIRKFAADHFNEEVLPIFLKTNENWNSPVAKFIMEEQGLGLVKLLETQEEDVVLLTAGEHKKACSLMGKLRLECADLLEARGVVLRDPALFSFLWVVDFPLFLPKEENPQELESAHHPFTAPHPSDIHLLYTEPHKVRSQHYDLVLNGNEIGGGSIRIHNSELQHCVLDTVLKEDVKLLSHLLQALDYGAPPHGGIALGLDRLMCLVTGAPSIRDVIAFPKSFRGHDLMSNAPDSIPPEELKPYHIQVSWPMDAETEKSSSNHPCRSES</sequence>
<protein>
    <recommendedName>
        <fullName>Aspartate--tRNA ligase, mitochondrial</fullName>
        <ecNumber evidence="3">6.1.1.12</ecNumber>
    </recommendedName>
    <alternativeName>
        <fullName>Aspartyl-tRNA synthetase</fullName>
        <shortName>AspRS</shortName>
    </alternativeName>
</protein>
<accession>A6QPU5</accession>
<keyword id="KW-0007">Acetylation</keyword>
<keyword id="KW-0030">Aminoacyl-tRNA synthetase</keyword>
<keyword id="KW-0067">ATP-binding</keyword>
<keyword id="KW-0436">Ligase</keyword>
<keyword id="KW-0472">Membrane</keyword>
<keyword id="KW-0496">Mitochondrion</keyword>
<keyword id="KW-0547">Nucleotide-binding</keyword>
<keyword id="KW-0597">Phosphoprotein</keyword>
<keyword id="KW-0648">Protein biosynthesis</keyword>
<keyword id="KW-1185">Reference proteome</keyword>
<keyword id="KW-0809">Transit peptide</keyword>